<protein>
    <recommendedName>
        <fullName evidence="1">Phosphoglycerol transferase I</fullName>
        <ecNumber evidence="1">2.7.8.20</ecNumber>
    </recommendedName>
    <alternativeName>
        <fullName evidence="1">Phosphatidylglycerol--membrane-oligosaccharide glycerophosphotransferase</fullName>
    </alternativeName>
</protein>
<sequence length="763" mass="85494">MSELLSFALFLASVLIYAWKAGRNTWWFAATLTVLGLFVVLNITLFASDYFTGDGINDAVLYTLTNSLTGAGVSKYILPGIGIVLGLTAVFGALGWILRRRRHHPHHFGYSLLALLLALGSVDASPAFRQITELVKSQSRDGDPDFAAYYKEPSKTIPDPKLNLVYIYGESLERTYFDNEAFPDLTPELGALKNEGLDFSHTQQLPGTDYTIAGMVASQCGIPLFAPFEGNASASVSSFFPQNICLGDILKNSGYQNYFVQGANLRFAGKDVFLKSHGFDHLYGSEELKSVVADPHYRNDWGFYDDTVLDEAWKKFEELSRSGQRFSLFTLTVDTHHPDGFISRTCNRKKYDFDGKPNQSFSAVSCSQENIATFINKIKASPWFKDTVIVVSSDHLAMNNTAWKYLNKQDRNNLFFVIRGDKPQQETLAVKRNTMDNGATVLDILGGDNYLGLGRSSLSGQSMSEIFLNIKEKTLAWKPDIIRLWKFPKEMKEFTIDQQKNMIAFSGSHFRLPLLLRVSDKRVEPLPESEYSAPLRFQLADFAPRDNFVWVDRCYKMAQLWAPELALSTDWCVSQGQLGGQQIVQHVDKTTWQGKTAFKDTVIDMARYKGNVDTLKIVDNDIRYKADSFIFNVAGAPEEVKQFSGISRPESWGRWSNAQLGDEVKIEYKHPLPKKFDLVITAKAYGNNASRPIPVRVGNEEQTLVLGNEVTTTTLHFDNPTDADTLVIVPPEPVSTNEGNILGHSPRKLGIGMVEIKVVEREG</sequence>
<feature type="chain" id="PRO_1000213472" description="Phosphoglycerol transferase I">
    <location>
        <begin position="1"/>
        <end position="763"/>
    </location>
</feature>
<feature type="transmembrane region" description="Helical" evidence="1">
    <location>
        <begin position="1"/>
        <end position="21"/>
    </location>
</feature>
<feature type="transmembrane region" description="Helical" evidence="1">
    <location>
        <begin position="26"/>
        <end position="46"/>
    </location>
</feature>
<feature type="transmembrane region" description="Helical" evidence="1">
    <location>
        <begin position="77"/>
        <end position="97"/>
    </location>
</feature>
<feature type="transmembrane region" description="Helical" evidence="1">
    <location>
        <begin position="108"/>
        <end position="128"/>
    </location>
</feature>
<evidence type="ECO:0000255" key="1">
    <source>
        <dbReference type="HAMAP-Rule" id="MF_01070"/>
    </source>
</evidence>
<accession>C4ZT42</accession>
<proteinExistence type="inferred from homology"/>
<dbReference type="EC" id="2.7.8.20" evidence="1"/>
<dbReference type="EMBL" id="CP001396">
    <property type="protein sequence ID" value="ACR64043.1"/>
    <property type="molecule type" value="Genomic_DNA"/>
</dbReference>
<dbReference type="RefSeq" id="WP_001292679.1">
    <property type="nucleotide sequence ID" value="NC_012759.1"/>
</dbReference>
<dbReference type="SMR" id="C4ZT42"/>
<dbReference type="KEGG" id="ebw:BWG_4052"/>
<dbReference type="HOGENOM" id="CLU_023986_1_0_6"/>
<dbReference type="UniPathway" id="UPA00637"/>
<dbReference type="GO" id="GO:0005886">
    <property type="term" value="C:plasma membrane"/>
    <property type="evidence" value="ECO:0007669"/>
    <property type="project" value="UniProtKB-SubCell"/>
</dbReference>
<dbReference type="GO" id="GO:0008960">
    <property type="term" value="F:phosphatidylglycerol-membrane-oligosaccharide glycerophosphotransferase activity"/>
    <property type="evidence" value="ECO:0007669"/>
    <property type="project" value="UniProtKB-UniRule"/>
</dbReference>
<dbReference type="GO" id="GO:0009250">
    <property type="term" value="P:glucan biosynthetic process"/>
    <property type="evidence" value="ECO:0007669"/>
    <property type="project" value="UniProtKB-UniRule"/>
</dbReference>
<dbReference type="CDD" id="cd16015">
    <property type="entry name" value="LTA_synthase"/>
    <property type="match status" value="1"/>
</dbReference>
<dbReference type="FunFam" id="3.40.720.10:FF:000009">
    <property type="entry name" value="Phosphoglycerol transferase I"/>
    <property type="match status" value="1"/>
</dbReference>
<dbReference type="Gene3D" id="3.40.720.10">
    <property type="entry name" value="Alkaline Phosphatase, subunit A"/>
    <property type="match status" value="1"/>
</dbReference>
<dbReference type="HAMAP" id="MF_01070">
    <property type="entry name" value="MdoB_OpgB"/>
    <property type="match status" value="1"/>
</dbReference>
<dbReference type="InterPro" id="IPR017850">
    <property type="entry name" value="Alkaline_phosphatase_core_sf"/>
</dbReference>
<dbReference type="InterPro" id="IPR054288">
    <property type="entry name" value="DUF7024"/>
</dbReference>
<dbReference type="InterPro" id="IPR020881">
    <property type="entry name" value="OpgB"/>
</dbReference>
<dbReference type="InterPro" id="IPR050448">
    <property type="entry name" value="OpgB/LTA_synthase_biosynth"/>
</dbReference>
<dbReference type="InterPro" id="IPR000917">
    <property type="entry name" value="Sulfatase_N"/>
</dbReference>
<dbReference type="NCBIfam" id="NF003000">
    <property type="entry name" value="PRK03776.1"/>
    <property type="match status" value="1"/>
</dbReference>
<dbReference type="PANTHER" id="PTHR47371">
    <property type="entry name" value="LIPOTEICHOIC ACID SYNTHASE"/>
    <property type="match status" value="1"/>
</dbReference>
<dbReference type="PANTHER" id="PTHR47371:SF3">
    <property type="entry name" value="PHOSPHOGLYCEROL TRANSFERASE I"/>
    <property type="match status" value="1"/>
</dbReference>
<dbReference type="Pfam" id="PF22895">
    <property type="entry name" value="DUF7024"/>
    <property type="match status" value="1"/>
</dbReference>
<dbReference type="Pfam" id="PF00884">
    <property type="entry name" value="Sulfatase"/>
    <property type="match status" value="1"/>
</dbReference>
<dbReference type="SUPFAM" id="SSF53649">
    <property type="entry name" value="Alkaline phosphatase-like"/>
    <property type="match status" value="1"/>
</dbReference>
<name>OPGB_ECOBW</name>
<reference key="1">
    <citation type="journal article" date="2009" name="J. Bacteriol.">
        <title>Genomic sequencing reveals regulatory mutations and recombinational events in the widely used MC4100 lineage of Escherichia coli K-12.</title>
        <authorList>
            <person name="Ferenci T."/>
            <person name="Zhou Z."/>
            <person name="Betteridge T."/>
            <person name="Ren Y."/>
            <person name="Liu Y."/>
            <person name="Feng L."/>
            <person name="Reeves P.R."/>
            <person name="Wang L."/>
        </authorList>
    </citation>
    <scope>NUCLEOTIDE SEQUENCE [LARGE SCALE GENOMIC DNA]</scope>
    <source>
        <strain>K12 / MC4100 / BW2952</strain>
    </source>
</reference>
<gene>
    <name evidence="1" type="primary">mdoB</name>
    <name evidence="1" type="synonym">opgB</name>
    <name type="ordered locus">BWG_4052</name>
</gene>
<keyword id="KW-0997">Cell inner membrane</keyword>
<keyword id="KW-1003">Cell membrane</keyword>
<keyword id="KW-0472">Membrane</keyword>
<keyword id="KW-0808">Transferase</keyword>
<keyword id="KW-0812">Transmembrane</keyword>
<keyword id="KW-1133">Transmembrane helix</keyword>
<organism>
    <name type="scientific">Escherichia coli (strain K12 / MC4100 / BW2952)</name>
    <dbReference type="NCBI Taxonomy" id="595496"/>
    <lineage>
        <taxon>Bacteria</taxon>
        <taxon>Pseudomonadati</taxon>
        <taxon>Pseudomonadota</taxon>
        <taxon>Gammaproteobacteria</taxon>
        <taxon>Enterobacterales</taxon>
        <taxon>Enterobacteriaceae</taxon>
        <taxon>Escherichia</taxon>
    </lineage>
</organism>
<comment type="function">
    <text evidence="1">Transfers a phosphoglycerol residue from phosphatidylglycerol to the membrane-bound nascent glucan backbones.</text>
</comment>
<comment type="catalytic activity">
    <reaction evidence="1">
        <text>a phosphatidylglycerol + a membrane-derived-oligosaccharide D-glucose = a 1,2-diacyl-sn-glycerol + a membrane-derived-oligosaccharide 6-(glycerophospho)-D-glucose.</text>
        <dbReference type="EC" id="2.7.8.20"/>
    </reaction>
</comment>
<comment type="pathway">
    <text evidence="1">Glycan metabolism; osmoregulated periplasmic glucan (OPG) biosynthesis.</text>
</comment>
<comment type="subcellular location">
    <subcellularLocation>
        <location evidence="1">Cell inner membrane</location>
        <topology evidence="1">Multi-pass membrane protein</topology>
    </subcellularLocation>
</comment>
<comment type="similarity">
    <text evidence="1">Belongs to the OpgB family.</text>
</comment>